<proteinExistence type="inferred from homology"/>
<keyword id="KW-0131">Cell cycle</keyword>
<keyword id="KW-0227">DNA damage</keyword>
<keyword id="KW-0234">DNA repair</keyword>
<keyword id="KW-0236">DNA replication inhibitor</keyword>
<keyword id="KW-0469">Meiosis</keyword>
<keyword id="KW-0539">Nucleus</keyword>
<keyword id="KW-1185">Reference proteome</keyword>
<sequence length="1074" mass="122827">MELPDSPPPLDAPSPPHFLDAPQDRWNVFYPAVQTLVNALGGYEEVESPPDSGIFETVYRPGDSVLGVLKDLKKLWRKDDEDDERTVARCMYRAELMKELVAIVVECAERGEWGRKVALVACDLIAALTWPIDVAQELKEIEDEGPVVTDYASLLRAQLEYKALFLKTTKPLKSILSLMVPCLAKPRKDEKDSRIISLGLHVVRNLLAIKDAVAEGTATGEKEEFAHLQSDLITQLDSLTYLQLFLTLASCADKTDLNPFNVIVLDILHLIFRGIKPSELVQDQKRVPIDSLARLLEKEKKQKALNSRVGSTRHSRFGTTITVKTAEQRVVLHRQTAIIENPGKILDMTKRKKAVVAKRMDDLTVFVNLSSDAMVILQSFSKSFLEICYNTFIESILRDIRMERTKIRPSDNIRVFYLSSFFIEYLLLLRHKLLEKGGSRRLEELPLGLVAQIAEMDSVKWLFARLRICWDDKPKAWTELQACIECFTQILLLIDDMSTSTNEEDVEVAEILQHQLYYNYDILDSALAVVREYKNQSIAYLDSIIHFAYVLLRMLEKYSKTKAFMFIRKRKNTHKKRKERQAASQANADREQRKIPEEYGDEGEEAFAPDEDAPSYAEHAFTFQSFEKRFAQEAVVNTLLTYLERFLEFDGPEPMKRVVGLMHRQVIKAHAEGLYFKVSTLIIFRRILDKQHVLPAAPSSRDLITLITYILRKFFKHVEKEPFTLVEALSSKSRGKWKTVGGGSDDDDDEMAGQRGRIKEKMGPVELQFIKKHKFSWSQQMSIAFAIIWGDGHGYLIKWIVEVLEQVLAAKQEIVLTTDGGINGDEDEEDEDGNARVRRFGRPSDEAISKFTQFDLQPEESEQITAVTSNPHFRLMLKLLSFDLPPPPMELDFEEDVSSEELALAREKSDSAWFLPANVLPSDIEASIGALKQYMEEPPTLDDDPKKLLRRKARATRRRRRSPSVESYDSETGEVRPGHQHKKNPRQKRAKKAVETQNYKSAAFIEDSDDEDPEATRRFFENEERLRREMDELAAQGGHPMMERGVKRKRGKKNGKGAISDTPPPSQRGNDRET</sequence>
<name>TOF1_CRYNJ</name>
<evidence type="ECO:0000250" key="1"/>
<evidence type="ECO:0000256" key="2">
    <source>
        <dbReference type="SAM" id="MobiDB-lite"/>
    </source>
</evidence>
<evidence type="ECO:0000305" key="3"/>
<accession>P0CR92</accession>
<accession>Q55QA1</accession>
<accession>Q5KFW4</accession>
<gene>
    <name type="primary">TOF1</name>
    <name type="ordered locus">CNF00340</name>
</gene>
<dbReference type="EMBL" id="AE017346">
    <property type="protein sequence ID" value="AAW44173.2"/>
    <property type="molecule type" value="Genomic_DNA"/>
</dbReference>
<dbReference type="RefSeq" id="XP_571480.1">
    <property type="nucleotide sequence ID" value="XM_571480.1"/>
</dbReference>
<dbReference type="SMR" id="P0CR92"/>
<dbReference type="FunCoup" id="P0CR92">
    <property type="interactions" value="96"/>
</dbReference>
<dbReference type="STRING" id="214684.P0CR92"/>
<dbReference type="PaxDb" id="214684-P0CR92"/>
<dbReference type="EnsemblFungi" id="AAW44173">
    <property type="protein sequence ID" value="AAW44173"/>
    <property type="gene ID" value="CNF00340"/>
</dbReference>
<dbReference type="VEuPathDB" id="FungiDB:CNF00340"/>
<dbReference type="eggNOG" id="KOG1974">
    <property type="taxonomic scope" value="Eukaryota"/>
</dbReference>
<dbReference type="InParanoid" id="P0CR92"/>
<dbReference type="OrthoDB" id="310853at2759"/>
<dbReference type="Proteomes" id="UP000002149">
    <property type="component" value="Chromosome 6"/>
</dbReference>
<dbReference type="GO" id="GO:0031298">
    <property type="term" value="C:replication fork protection complex"/>
    <property type="evidence" value="ECO:0000318"/>
    <property type="project" value="GO_Central"/>
</dbReference>
<dbReference type="GO" id="GO:0003677">
    <property type="term" value="F:DNA binding"/>
    <property type="evidence" value="ECO:0000318"/>
    <property type="project" value="GO_Central"/>
</dbReference>
<dbReference type="GO" id="GO:0006281">
    <property type="term" value="P:DNA repair"/>
    <property type="evidence" value="ECO:0000318"/>
    <property type="project" value="GO_Central"/>
</dbReference>
<dbReference type="GO" id="GO:0000076">
    <property type="term" value="P:DNA replication checkpoint signaling"/>
    <property type="evidence" value="ECO:0000318"/>
    <property type="project" value="GO_Central"/>
</dbReference>
<dbReference type="GO" id="GO:0051321">
    <property type="term" value="P:meiotic cell cycle"/>
    <property type="evidence" value="ECO:0007669"/>
    <property type="project" value="UniProtKB-KW"/>
</dbReference>
<dbReference type="GO" id="GO:0043111">
    <property type="term" value="P:replication fork arrest"/>
    <property type="evidence" value="ECO:0000318"/>
    <property type="project" value="GO_Central"/>
</dbReference>
<dbReference type="InterPro" id="IPR044998">
    <property type="entry name" value="Timeless"/>
</dbReference>
<dbReference type="InterPro" id="IPR006906">
    <property type="entry name" value="Timeless_N"/>
</dbReference>
<dbReference type="PANTHER" id="PTHR22940:SF4">
    <property type="entry name" value="PROTEIN TIMELESS HOMOLOG"/>
    <property type="match status" value="1"/>
</dbReference>
<dbReference type="PANTHER" id="PTHR22940">
    <property type="entry name" value="TIMEOUT/TIMELESS-2"/>
    <property type="match status" value="1"/>
</dbReference>
<dbReference type="Pfam" id="PF04821">
    <property type="entry name" value="TIMELESS"/>
    <property type="match status" value="1"/>
</dbReference>
<organism>
    <name type="scientific">Cryptococcus neoformans var. neoformans serotype D (strain JEC21 / ATCC MYA-565)</name>
    <name type="common">Filobasidiella neoformans</name>
    <dbReference type="NCBI Taxonomy" id="214684"/>
    <lineage>
        <taxon>Eukaryota</taxon>
        <taxon>Fungi</taxon>
        <taxon>Dikarya</taxon>
        <taxon>Basidiomycota</taxon>
        <taxon>Agaricomycotina</taxon>
        <taxon>Tremellomycetes</taxon>
        <taxon>Tremellales</taxon>
        <taxon>Cryptococcaceae</taxon>
        <taxon>Cryptococcus</taxon>
        <taxon>Cryptococcus neoformans species complex</taxon>
    </lineage>
</organism>
<reference key="1">
    <citation type="journal article" date="2005" name="Science">
        <title>The genome of the basidiomycetous yeast and human pathogen Cryptococcus neoformans.</title>
        <authorList>
            <person name="Loftus B.J."/>
            <person name="Fung E."/>
            <person name="Roncaglia P."/>
            <person name="Rowley D."/>
            <person name="Amedeo P."/>
            <person name="Bruno D."/>
            <person name="Vamathevan J."/>
            <person name="Miranda M."/>
            <person name="Anderson I.J."/>
            <person name="Fraser J.A."/>
            <person name="Allen J.E."/>
            <person name="Bosdet I.E."/>
            <person name="Brent M.R."/>
            <person name="Chiu R."/>
            <person name="Doering T.L."/>
            <person name="Donlin M.J."/>
            <person name="D'Souza C.A."/>
            <person name="Fox D.S."/>
            <person name="Grinberg V."/>
            <person name="Fu J."/>
            <person name="Fukushima M."/>
            <person name="Haas B.J."/>
            <person name="Huang J.C."/>
            <person name="Janbon G."/>
            <person name="Jones S.J.M."/>
            <person name="Koo H.L."/>
            <person name="Krzywinski M.I."/>
            <person name="Kwon-Chung K.J."/>
            <person name="Lengeler K.B."/>
            <person name="Maiti R."/>
            <person name="Marra M.A."/>
            <person name="Marra R.E."/>
            <person name="Mathewson C.A."/>
            <person name="Mitchell T.G."/>
            <person name="Pertea M."/>
            <person name="Riggs F.R."/>
            <person name="Salzberg S.L."/>
            <person name="Schein J.E."/>
            <person name="Shvartsbeyn A."/>
            <person name="Shin H."/>
            <person name="Shumway M."/>
            <person name="Specht C.A."/>
            <person name="Suh B.B."/>
            <person name="Tenney A."/>
            <person name="Utterback T.R."/>
            <person name="Wickes B.L."/>
            <person name="Wortman J.R."/>
            <person name="Wye N.H."/>
            <person name="Kronstad J.W."/>
            <person name="Lodge J.K."/>
            <person name="Heitman J."/>
            <person name="Davis R.W."/>
            <person name="Fraser C.M."/>
            <person name="Hyman R.W."/>
        </authorList>
    </citation>
    <scope>NUCLEOTIDE SEQUENCE [LARGE SCALE GENOMIC DNA]</scope>
    <source>
        <strain>JEC21 / ATCC MYA-565</strain>
    </source>
</reference>
<feature type="chain" id="PRO_0000301737" description="Topoisomerase 1-associated factor 1">
    <location>
        <begin position="1"/>
        <end position="1074"/>
    </location>
</feature>
<feature type="region of interest" description="Disordered" evidence="2">
    <location>
        <begin position="572"/>
        <end position="595"/>
    </location>
</feature>
<feature type="region of interest" description="Disordered" evidence="2">
    <location>
        <begin position="936"/>
        <end position="1074"/>
    </location>
</feature>
<feature type="compositionally biased region" description="Basic residues" evidence="2">
    <location>
        <begin position="948"/>
        <end position="962"/>
    </location>
</feature>
<feature type="compositionally biased region" description="Basic residues" evidence="2">
    <location>
        <begin position="978"/>
        <end position="991"/>
    </location>
</feature>
<feature type="compositionally biased region" description="Basic and acidic residues" evidence="2">
    <location>
        <begin position="1014"/>
        <end position="1031"/>
    </location>
</feature>
<feature type="compositionally biased region" description="Basic residues" evidence="2">
    <location>
        <begin position="1046"/>
        <end position="1055"/>
    </location>
</feature>
<comment type="function">
    <text evidence="1">Involved in chromosome segregation during meiosis and DNA damage repair.</text>
</comment>
<comment type="subcellular location">
    <subcellularLocation>
        <location evidence="1">Nucleus</location>
    </subcellularLocation>
</comment>
<comment type="similarity">
    <text evidence="3">Belongs to the timeless family.</text>
</comment>
<protein>
    <recommendedName>
        <fullName>Topoisomerase 1-associated factor 1</fullName>
    </recommendedName>
</protein>